<gene>
    <name type="primary">DAPA</name>
    <name type="synonym">DHPS1</name>
</gene>
<feature type="transit peptide" description="Chloroplast" evidence="2">
    <location>
        <begin position="1"/>
        <end position="51"/>
    </location>
</feature>
<feature type="chain" id="PRO_0000007199" description="4-hydroxy-tetrahydrodipicolinate synthase, chloroplastic">
    <location>
        <begin position="52"/>
        <end position="377"/>
    </location>
</feature>
<feature type="region of interest" description="Disordered" evidence="3">
    <location>
        <begin position="21"/>
        <end position="50"/>
    </location>
</feature>
<feature type="compositionally biased region" description="Low complexity" evidence="3">
    <location>
        <begin position="24"/>
        <end position="44"/>
    </location>
</feature>
<feature type="active site" description="Proton donor/acceptor" evidence="1">
    <location>
        <position position="206"/>
    </location>
</feature>
<feature type="active site" description="Schiff-base intermediate with substrate" evidence="1">
    <location>
        <position position="234"/>
    </location>
</feature>
<feature type="binding site" evidence="1">
    <location>
        <position position="120"/>
    </location>
    <ligand>
        <name>pyruvate</name>
        <dbReference type="ChEBI" id="CHEBI:15361"/>
    </ligand>
</feature>
<feature type="binding site" evidence="1">
    <location>
        <position position="273"/>
    </location>
    <ligand>
        <name>pyruvate</name>
        <dbReference type="ChEBI" id="CHEBI:15361"/>
    </ligand>
</feature>
<feature type="site" description="Part of a proton relay during catalysis" evidence="1">
    <location>
        <position position="119"/>
    </location>
</feature>
<feature type="site" description="Part of a proton relay during catalysis" evidence="1">
    <location>
        <position position="182"/>
    </location>
</feature>
<reference key="1">
    <citation type="journal article" date="1999" name="Plant Mol. Biol.">
        <title>The DapA gene encoding the lysine biosynthetic enzyme dihydrodipicolinate synthase from Coix lacryma-jobi: cloning, characterization, and expression analysis.</title>
        <authorList>
            <person name="Dante R.A."/>
            <person name="Cord-Neto G."/>
            <person name="Leite A."/>
            <person name="Arruda P."/>
        </authorList>
    </citation>
    <scope>NUCLEOTIDE SEQUENCE [GENOMIC DNA]</scope>
    <source>
        <strain>cv. Adlay</strain>
    </source>
</reference>
<accession>Q39535</accession>
<protein>
    <recommendedName>
        <fullName>4-hydroxy-tetrahydrodipicolinate synthase, chloroplastic</fullName>
        <shortName>HTPA synthase</shortName>
        <ecNumber>4.3.3.7</ecNumber>
    </recommendedName>
</protein>
<proteinExistence type="inferred from homology"/>
<dbReference type="EC" id="4.3.3.7"/>
<dbReference type="EMBL" id="U61730">
    <property type="protein sequence ID" value="AAB04021.1"/>
    <property type="molecule type" value="Genomic_DNA"/>
</dbReference>
<dbReference type="SMR" id="Q39535"/>
<dbReference type="UniPathway" id="UPA00034">
    <property type="reaction ID" value="UER00017"/>
</dbReference>
<dbReference type="GO" id="GO:0009507">
    <property type="term" value="C:chloroplast"/>
    <property type="evidence" value="ECO:0007669"/>
    <property type="project" value="UniProtKB-SubCell"/>
</dbReference>
<dbReference type="GO" id="GO:0008840">
    <property type="term" value="F:4-hydroxy-tetrahydrodipicolinate synthase activity"/>
    <property type="evidence" value="ECO:0007669"/>
    <property type="project" value="UniProtKB-EC"/>
</dbReference>
<dbReference type="GO" id="GO:0019877">
    <property type="term" value="P:diaminopimelate biosynthetic process"/>
    <property type="evidence" value="ECO:0007669"/>
    <property type="project" value="UniProtKB-KW"/>
</dbReference>
<dbReference type="GO" id="GO:0009089">
    <property type="term" value="P:lysine biosynthetic process via diaminopimelate"/>
    <property type="evidence" value="ECO:0007669"/>
    <property type="project" value="UniProtKB-UniPathway"/>
</dbReference>
<dbReference type="CDD" id="cd00950">
    <property type="entry name" value="DHDPS"/>
    <property type="match status" value="1"/>
</dbReference>
<dbReference type="Gene3D" id="3.20.20.70">
    <property type="entry name" value="Aldolase class I"/>
    <property type="match status" value="1"/>
</dbReference>
<dbReference type="InterPro" id="IPR013785">
    <property type="entry name" value="Aldolase_TIM"/>
</dbReference>
<dbReference type="InterPro" id="IPR005263">
    <property type="entry name" value="DapA"/>
</dbReference>
<dbReference type="InterPro" id="IPR002220">
    <property type="entry name" value="DapA-like"/>
</dbReference>
<dbReference type="InterPro" id="IPR020625">
    <property type="entry name" value="Schiff_base-form_aldolases_AS"/>
</dbReference>
<dbReference type="InterPro" id="IPR020624">
    <property type="entry name" value="Schiff_base-form_aldolases_CS"/>
</dbReference>
<dbReference type="NCBIfam" id="TIGR00674">
    <property type="entry name" value="dapA"/>
    <property type="match status" value="1"/>
</dbReference>
<dbReference type="PANTHER" id="PTHR12128:SF57">
    <property type="entry name" value="4-HYDROXY-TETRAHYDRODIPICOLINATE SYNTHASE, CHLOROPLASTIC"/>
    <property type="match status" value="1"/>
</dbReference>
<dbReference type="PANTHER" id="PTHR12128">
    <property type="entry name" value="DIHYDRODIPICOLINATE SYNTHASE"/>
    <property type="match status" value="1"/>
</dbReference>
<dbReference type="Pfam" id="PF00701">
    <property type="entry name" value="DHDPS"/>
    <property type="match status" value="1"/>
</dbReference>
<dbReference type="PRINTS" id="PR00146">
    <property type="entry name" value="DHPICSNTHASE"/>
</dbReference>
<dbReference type="SMART" id="SM01130">
    <property type="entry name" value="DHDPS"/>
    <property type="match status" value="1"/>
</dbReference>
<dbReference type="SUPFAM" id="SSF51569">
    <property type="entry name" value="Aldolase"/>
    <property type="match status" value="1"/>
</dbReference>
<dbReference type="PROSITE" id="PS00665">
    <property type="entry name" value="DHDPS_1"/>
    <property type="match status" value="1"/>
</dbReference>
<dbReference type="PROSITE" id="PS00666">
    <property type="entry name" value="DHDPS_2"/>
    <property type="match status" value="1"/>
</dbReference>
<organism>
    <name type="scientific">Coix lacryma-jobi</name>
    <name type="common">Job's tears</name>
    <dbReference type="NCBI Taxonomy" id="4505"/>
    <lineage>
        <taxon>Eukaryota</taxon>
        <taxon>Viridiplantae</taxon>
        <taxon>Streptophyta</taxon>
        <taxon>Embryophyta</taxon>
        <taxon>Tracheophyta</taxon>
        <taxon>Spermatophyta</taxon>
        <taxon>Magnoliopsida</taxon>
        <taxon>Liliopsida</taxon>
        <taxon>Poales</taxon>
        <taxon>Poaceae</taxon>
        <taxon>PACMAD clade</taxon>
        <taxon>Panicoideae</taxon>
        <taxon>Andropogonodae</taxon>
        <taxon>Andropogoneae</taxon>
        <taxon>Rottboelliinae</taxon>
        <taxon>Coix</taxon>
    </lineage>
</organism>
<evidence type="ECO:0000250" key="1"/>
<evidence type="ECO:0000255" key="2"/>
<evidence type="ECO:0000256" key="3">
    <source>
        <dbReference type="SAM" id="MobiDB-lite"/>
    </source>
</evidence>
<evidence type="ECO:0000305" key="4"/>
<sequence>MISPRMTTNLLPARTISLVSNGGAATASPSSPSVAARPRRPSSGTGRGKVSAITLDDYLPMRSTEVKNRTSTDDITSLRLITAVKTPYLPDGRFDLEAYDSLINMQIEGGAEGVIVGGTTGEGHLMSWDEHIMLIGHTVNCFGSRIKVIGNTGSNSTREAVHATEQGFAVGMHAALHINPYYGKTSTEGMISHFESVLPMGPTIIYNVPSRSAQDIPPEVIVAISGYINMAGVKECIGHERIKHYADKGITIWSGNDDECHDSRWKYGATGVISVTSNLVPGLMHSLMYKGENAVLKEKLLPLMKWLFCQPNPIALNTALAQLGVARPVFRLPYVPLPLEKRAEFVRIVEAIGRENFVGQKETRVLDDDDFVLISRY</sequence>
<name>DAPA_COILA</name>
<keyword id="KW-0028">Amino-acid biosynthesis</keyword>
<keyword id="KW-0150">Chloroplast</keyword>
<keyword id="KW-0220">Diaminopimelate biosynthesis</keyword>
<keyword id="KW-0456">Lyase</keyword>
<keyword id="KW-0457">Lysine biosynthesis</keyword>
<keyword id="KW-0934">Plastid</keyword>
<keyword id="KW-0704">Schiff base</keyword>
<keyword id="KW-0809">Transit peptide</keyword>
<comment type="function">
    <text evidence="1">Catalyzes the condensation of (S)-aspartate-beta-semialdehyde [(S)-ASA] and pyruvate to 4-hydroxy-tetrahydrodipicolinate (HTPA).</text>
</comment>
<comment type="catalytic activity">
    <reaction>
        <text>L-aspartate 4-semialdehyde + pyruvate = (2S,4S)-4-hydroxy-2,3,4,5-tetrahydrodipicolinate + H2O + H(+)</text>
        <dbReference type="Rhea" id="RHEA:34171"/>
        <dbReference type="ChEBI" id="CHEBI:15361"/>
        <dbReference type="ChEBI" id="CHEBI:15377"/>
        <dbReference type="ChEBI" id="CHEBI:15378"/>
        <dbReference type="ChEBI" id="CHEBI:67139"/>
        <dbReference type="ChEBI" id="CHEBI:537519"/>
        <dbReference type="EC" id="4.3.3.7"/>
    </reaction>
</comment>
<comment type="pathway">
    <text>Amino-acid biosynthesis; L-lysine biosynthesis via DAP pathway; (S)-tetrahydrodipicolinate from L-aspartate: step 3/4.</text>
</comment>
<comment type="subcellular location">
    <subcellularLocation>
        <location>Plastid</location>
        <location>Chloroplast</location>
    </subcellularLocation>
</comment>
<comment type="similarity">
    <text evidence="4">Belongs to the DapA family.</text>
</comment>
<comment type="caution">
    <text evidence="4">Was originally thought to be a dihydrodipicolinate synthase (DHDPS), catalyzing the condensation of (S)-aspartate-beta-semialdehyde [(S)-ASA] and pyruvate to dihydrodipicolinate (DHDP). However, it was shown in E.coli that the product of the enzymatic reaction is not dihydrodipicolinate but in fact (4S)-4-hydroxy-2,3,4,5-tetrahydro-(2S)-dipicolinic acid (HTPA), and that the consecutive dehydration reaction leading to DHDP is not spontaneous but catalyzed by DapB.</text>
</comment>